<comment type="function">
    <text evidence="1">Catalyzes the sequential NAD-dependent oxidations of L-histidinol to L-histidinaldehyde and then to L-histidine.</text>
</comment>
<comment type="catalytic activity">
    <reaction evidence="1">
        <text>L-histidinol + 2 NAD(+) + H2O = L-histidine + 2 NADH + 3 H(+)</text>
        <dbReference type="Rhea" id="RHEA:20641"/>
        <dbReference type="ChEBI" id="CHEBI:15377"/>
        <dbReference type="ChEBI" id="CHEBI:15378"/>
        <dbReference type="ChEBI" id="CHEBI:57540"/>
        <dbReference type="ChEBI" id="CHEBI:57595"/>
        <dbReference type="ChEBI" id="CHEBI:57699"/>
        <dbReference type="ChEBI" id="CHEBI:57945"/>
        <dbReference type="EC" id="1.1.1.23"/>
    </reaction>
</comment>
<comment type="cofactor">
    <cofactor evidence="1">
        <name>Zn(2+)</name>
        <dbReference type="ChEBI" id="CHEBI:29105"/>
    </cofactor>
    <text evidence="1">Binds 1 zinc ion per subunit.</text>
</comment>
<comment type="pathway">
    <text evidence="1">Amino-acid biosynthesis; L-histidine biosynthesis; L-histidine from 5-phospho-alpha-D-ribose 1-diphosphate: step 9/9.</text>
</comment>
<comment type="similarity">
    <text evidence="1">Belongs to the histidinol dehydrogenase family.</text>
</comment>
<gene>
    <name evidence="1" type="primary">hisD</name>
    <name type="ordered locus">SAV2678</name>
</gene>
<name>HISX_STAAM</name>
<accession>P63952</accession>
<accession>Q99QW3</accession>
<organism>
    <name type="scientific">Staphylococcus aureus (strain Mu50 / ATCC 700699)</name>
    <dbReference type="NCBI Taxonomy" id="158878"/>
    <lineage>
        <taxon>Bacteria</taxon>
        <taxon>Bacillati</taxon>
        <taxon>Bacillota</taxon>
        <taxon>Bacilli</taxon>
        <taxon>Bacillales</taxon>
        <taxon>Staphylococcaceae</taxon>
        <taxon>Staphylococcus</taxon>
    </lineage>
</organism>
<evidence type="ECO:0000255" key="1">
    <source>
        <dbReference type="HAMAP-Rule" id="MF_01024"/>
    </source>
</evidence>
<dbReference type="EC" id="1.1.1.23" evidence="1"/>
<dbReference type="EMBL" id="BA000017">
    <property type="protein sequence ID" value="BAB58840.1"/>
    <property type="molecule type" value="Genomic_DNA"/>
</dbReference>
<dbReference type="RefSeq" id="WP_000930649.1">
    <property type="nucleotide sequence ID" value="NC_002758.2"/>
</dbReference>
<dbReference type="SMR" id="P63952"/>
<dbReference type="KEGG" id="sav:SAV2678"/>
<dbReference type="HOGENOM" id="CLU_006732_3_3_9"/>
<dbReference type="PhylomeDB" id="P63952"/>
<dbReference type="UniPathway" id="UPA00031">
    <property type="reaction ID" value="UER00014"/>
</dbReference>
<dbReference type="Proteomes" id="UP000002481">
    <property type="component" value="Chromosome"/>
</dbReference>
<dbReference type="GO" id="GO:0005829">
    <property type="term" value="C:cytosol"/>
    <property type="evidence" value="ECO:0007669"/>
    <property type="project" value="TreeGrafter"/>
</dbReference>
<dbReference type="GO" id="GO:0004399">
    <property type="term" value="F:histidinol dehydrogenase activity"/>
    <property type="evidence" value="ECO:0007669"/>
    <property type="project" value="UniProtKB-UniRule"/>
</dbReference>
<dbReference type="GO" id="GO:0051287">
    <property type="term" value="F:NAD binding"/>
    <property type="evidence" value="ECO:0007669"/>
    <property type="project" value="InterPro"/>
</dbReference>
<dbReference type="GO" id="GO:0008270">
    <property type="term" value="F:zinc ion binding"/>
    <property type="evidence" value="ECO:0007669"/>
    <property type="project" value="UniProtKB-UniRule"/>
</dbReference>
<dbReference type="GO" id="GO:0000105">
    <property type="term" value="P:L-histidine biosynthetic process"/>
    <property type="evidence" value="ECO:0007669"/>
    <property type="project" value="UniProtKB-UniRule"/>
</dbReference>
<dbReference type="CDD" id="cd06572">
    <property type="entry name" value="Histidinol_dh"/>
    <property type="match status" value="1"/>
</dbReference>
<dbReference type="FunFam" id="3.40.50.1980:FF:000001">
    <property type="entry name" value="Histidinol dehydrogenase"/>
    <property type="match status" value="1"/>
</dbReference>
<dbReference type="FunFam" id="3.40.50.1980:FF:000026">
    <property type="entry name" value="Histidinol dehydrogenase"/>
    <property type="match status" value="1"/>
</dbReference>
<dbReference type="Gene3D" id="1.20.5.1300">
    <property type="match status" value="1"/>
</dbReference>
<dbReference type="Gene3D" id="3.40.50.1980">
    <property type="entry name" value="Nitrogenase molybdenum iron protein domain"/>
    <property type="match status" value="2"/>
</dbReference>
<dbReference type="HAMAP" id="MF_01024">
    <property type="entry name" value="HisD"/>
    <property type="match status" value="1"/>
</dbReference>
<dbReference type="InterPro" id="IPR016161">
    <property type="entry name" value="Ald_DH/histidinol_DH"/>
</dbReference>
<dbReference type="InterPro" id="IPR001692">
    <property type="entry name" value="Histidinol_DH_CS"/>
</dbReference>
<dbReference type="InterPro" id="IPR022695">
    <property type="entry name" value="Histidinol_DH_monofunct"/>
</dbReference>
<dbReference type="InterPro" id="IPR012131">
    <property type="entry name" value="Hstdl_DH"/>
</dbReference>
<dbReference type="NCBIfam" id="TIGR00069">
    <property type="entry name" value="hisD"/>
    <property type="match status" value="1"/>
</dbReference>
<dbReference type="NCBIfam" id="NF010343">
    <property type="entry name" value="PRK13770.1"/>
    <property type="match status" value="1"/>
</dbReference>
<dbReference type="PANTHER" id="PTHR21256:SF2">
    <property type="entry name" value="HISTIDINE BIOSYNTHESIS TRIFUNCTIONAL PROTEIN"/>
    <property type="match status" value="1"/>
</dbReference>
<dbReference type="PANTHER" id="PTHR21256">
    <property type="entry name" value="HISTIDINOL DEHYDROGENASE HDH"/>
    <property type="match status" value="1"/>
</dbReference>
<dbReference type="Pfam" id="PF00815">
    <property type="entry name" value="Histidinol_dh"/>
    <property type="match status" value="1"/>
</dbReference>
<dbReference type="PIRSF" id="PIRSF000099">
    <property type="entry name" value="Histidinol_dh"/>
    <property type="match status" value="1"/>
</dbReference>
<dbReference type="PRINTS" id="PR00083">
    <property type="entry name" value="HOLDHDRGNASE"/>
</dbReference>
<dbReference type="SUPFAM" id="SSF53720">
    <property type="entry name" value="ALDH-like"/>
    <property type="match status" value="1"/>
</dbReference>
<dbReference type="PROSITE" id="PS00611">
    <property type="entry name" value="HISOL_DEHYDROGENASE"/>
    <property type="match status" value="1"/>
</dbReference>
<reference key="1">
    <citation type="journal article" date="2001" name="Lancet">
        <title>Whole genome sequencing of meticillin-resistant Staphylococcus aureus.</title>
        <authorList>
            <person name="Kuroda M."/>
            <person name="Ohta T."/>
            <person name="Uchiyama I."/>
            <person name="Baba T."/>
            <person name="Yuzawa H."/>
            <person name="Kobayashi I."/>
            <person name="Cui L."/>
            <person name="Oguchi A."/>
            <person name="Aoki K."/>
            <person name="Nagai Y."/>
            <person name="Lian J.-Q."/>
            <person name="Ito T."/>
            <person name="Kanamori M."/>
            <person name="Matsumaru H."/>
            <person name="Maruyama A."/>
            <person name="Murakami H."/>
            <person name="Hosoyama A."/>
            <person name="Mizutani-Ui Y."/>
            <person name="Takahashi N.K."/>
            <person name="Sawano T."/>
            <person name="Inoue R."/>
            <person name="Kaito C."/>
            <person name="Sekimizu K."/>
            <person name="Hirakawa H."/>
            <person name="Kuhara S."/>
            <person name="Goto S."/>
            <person name="Yabuzaki J."/>
            <person name="Kanehisa M."/>
            <person name="Yamashita A."/>
            <person name="Oshima K."/>
            <person name="Furuya K."/>
            <person name="Yoshino C."/>
            <person name="Shiba T."/>
            <person name="Hattori M."/>
            <person name="Ogasawara N."/>
            <person name="Hayashi H."/>
            <person name="Hiramatsu K."/>
        </authorList>
    </citation>
    <scope>NUCLEOTIDE SEQUENCE [LARGE SCALE GENOMIC DNA]</scope>
    <source>
        <strain>Mu50 / ATCC 700699</strain>
    </source>
</reference>
<keyword id="KW-0028">Amino-acid biosynthesis</keyword>
<keyword id="KW-0368">Histidine biosynthesis</keyword>
<keyword id="KW-0479">Metal-binding</keyword>
<keyword id="KW-0520">NAD</keyword>
<keyword id="KW-0560">Oxidoreductase</keyword>
<keyword id="KW-0862">Zinc</keyword>
<proteinExistence type="inferred from homology"/>
<protein>
    <recommendedName>
        <fullName evidence="1">Histidinol dehydrogenase</fullName>
        <shortName evidence="1">HDH</shortName>
        <ecNumber evidence="1">1.1.1.23</ecNumber>
    </recommendedName>
</protein>
<sequence>MLNAQQFLNQFSLEAPLDESLYPIIRDICQEVKVHGDKALKMYNLTFDHTKTDHLEISHEQIKAAFDTLDEKTKQALQQSYERIKAYQESIKQTNQQLEESVECYEIYHPLESVGIYVPGGKASYPSTVLMTATLAQVAGVENIVVVTPPQPNGVSQEVLAACYITQVNQVFQVGGAQSIAALTYGTETIPKVDKIVGPGNQFVAYAKKYLFGQVGIDQIAGPTEIALIIDDTADLDAIVYDVFAQAEHDELARTYVIGEDAQVLKDLESRIAKALPNVDRYDIVSKSIANQHYLIHASNFDEACHVMNTIAPEHASIQTVNPQPYIEKVKYVGALFIGHYSPEVIGDYVAGPSHVLPTNRTARFTNGLSVNDFLTRNTVIHLSKDTFEQIADSAQHIAHVEALYNHQQSILIRQS</sequence>
<feature type="chain" id="PRO_0000135852" description="Histidinol dehydrogenase">
    <location>
        <begin position="1"/>
        <end position="416"/>
    </location>
</feature>
<feature type="active site" description="Proton acceptor" evidence="1">
    <location>
        <position position="314"/>
    </location>
</feature>
<feature type="active site" description="Proton acceptor" evidence="1">
    <location>
        <position position="315"/>
    </location>
</feature>
<feature type="binding site" evidence="1">
    <location>
        <position position="117"/>
    </location>
    <ligand>
        <name>NAD(+)</name>
        <dbReference type="ChEBI" id="CHEBI:57540"/>
    </ligand>
</feature>
<feature type="binding site" evidence="1">
    <location>
        <position position="178"/>
    </location>
    <ligand>
        <name>NAD(+)</name>
        <dbReference type="ChEBI" id="CHEBI:57540"/>
    </ligand>
</feature>
<feature type="binding site" evidence="1">
    <location>
        <position position="201"/>
    </location>
    <ligand>
        <name>NAD(+)</name>
        <dbReference type="ChEBI" id="CHEBI:57540"/>
    </ligand>
</feature>
<feature type="binding site" evidence="1">
    <location>
        <position position="224"/>
    </location>
    <ligand>
        <name>substrate</name>
    </ligand>
</feature>
<feature type="binding site" evidence="1">
    <location>
        <position position="246"/>
    </location>
    <ligand>
        <name>substrate</name>
    </ligand>
</feature>
<feature type="binding site" evidence="1">
    <location>
        <position position="246"/>
    </location>
    <ligand>
        <name>Zn(2+)</name>
        <dbReference type="ChEBI" id="CHEBI:29105"/>
    </ligand>
</feature>
<feature type="binding site" evidence="1">
    <location>
        <position position="249"/>
    </location>
    <ligand>
        <name>substrate</name>
    </ligand>
</feature>
<feature type="binding site" evidence="1">
    <location>
        <position position="249"/>
    </location>
    <ligand>
        <name>Zn(2+)</name>
        <dbReference type="ChEBI" id="CHEBI:29105"/>
    </ligand>
</feature>
<feature type="binding site" evidence="1">
    <location>
        <position position="315"/>
    </location>
    <ligand>
        <name>substrate</name>
    </ligand>
</feature>
<feature type="binding site" evidence="1">
    <location>
        <position position="348"/>
    </location>
    <ligand>
        <name>substrate</name>
    </ligand>
</feature>
<feature type="binding site" evidence="1">
    <location>
        <position position="348"/>
    </location>
    <ligand>
        <name>Zn(2+)</name>
        <dbReference type="ChEBI" id="CHEBI:29105"/>
    </ligand>
</feature>
<feature type="binding site" evidence="1">
    <location>
        <position position="402"/>
    </location>
    <ligand>
        <name>substrate</name>
    </ligand>
</feature>
<feature type="binding site" evidence="1">
    <location>
        <position position="407"/>
    </location>
    <ligand>
        <name>substrate</name>
    </ligand>
</feature>
<feature type="binding site" evidence="1">
    <location>
        <position position="407"/>
    </location>
    <ligand>
        <name>Zn(2+)</name>
        <dbReference type="ChEBI" id="CHEBI:29105"/>
    </ligand>
</feature>